<keyword id="KW-0175">Coiled coil</keyword>
<keyword id="KW-0539">Nucleus</keyword>
<keyword id="KW-1185">Reference proteome</keyword>
<keyword id="KW-0687">Ribonucleoprotein</keyword>
<keyword id="KW-0690">Ribosome biogenesis</keyword>
<keyword id="KW-0698">rRNA processing</keyword>
<sequence>MSFYFKNIKPDLHSGNEDEEDDIASIIRINDTSDAEGSQSEDELKTLSFGSLKKADEMMDNEEQTSRKSKSKANGEKKHLNKPKSRELTEKQRKLDDGQRRQSGLQEEEAQQKSQSIKMFAEESFGEESDSDSDGGFFDEESNDEANQNGKKKKGKRKHAPTESSSKKKVRSMRKIPGLEDNKSKSIYQDVRFDKAMGKSEDLAKIRQRYKFLDEYREKEINELDSMLHDRKFLSKISDREKSEMEQQVRRMKSRLETVQVMEMEQKIVKDYEAEINKNNKNKYHLKDSEKRKVIQKWKFEHMKGKQREKVMDRKRKKRLGKEFKQFEFHKR</sequence>
<protein>
    <recommendedName>
        <fullName>rRNA biogenesis protein RRP36</fullName>
    </recommendedName>
    <alternativeName>
        <fullName>Ribosomal RNA-processing protein 36</fullName>
    </alternativeName>
</protein>
<organism>
    <name type="scientific">Kluyveromyces lactis (strain ATCC 8585 / CBS 2359 / DSM 70799 / NBRC 1267 / NRRL Y-1140 / WM37)</name>
    <name type="common">Yeast</name>
    <name type="synonym">Candida sphaerica</name>
    <dbReference type="NCBI Taxonomy" id="284590"/>
    <lineage>
        <taxon>Eukaryota</taxon>
        <taxon>Fungi</taxon>
        <taxon>Dikarya</taxon>
        <taxon>Ascomycota</taxon>
        <taxon>Saccharomycotina</taxon>
        <taxon>Saccharomycetes</taxon>
        <taxon>Saccharomycetales</taxon>
        <taxon>Saccharomycetaceae</taxon>
        <taxon>Kluyveromyces</taxon>
    </lineage>
</organism>
<dbReference type="EMBL" id="CR382123">
    <property type="protein sequence ID" value="CAH01354.1"/>
    <property type="molecule type" value="Genomic_DNA"/>
</dbReference>
<dbReference type="RefSeq" id="XP_452503.1">
    <property type="nucleotide sequence ID" value="XM_452503.1"/>
</dbReference>
<dbReference type="SMR" id="Q6CU86"/>
<dbReference type="FunCoup" id="Q6CU86">
    <property type="interactions" value="605"/>
</dbReference>
<dbReference type="STRING" id="284590.Q6CU86"/>
<dbReference type="PaxDb" id="284590-Q6CU86"/>
<dbReference type="KEGG" id="kla:KLLA0_C06842g"/>
<dbReference type="eggNOG" id="KOG3190">
    <property type="taxonomic scope" value="Eukaryota"/>
</dbReference>
<dbReference type="HOGENOM" id="CLU_048802_3_0_1"/>
<dbReference type="InParanoid" id="Q6CU86"/>
<dbReference type="OMA" id="HMKSKQR"/>
<dbReference type="Proteomes" id="UP000000598">
    <property type="component" value="Chromosome C"/>
</dbReference>
<dbReference type="GO" id="GO:0030686">
    <property type="term" value="C:90S preribosome"/>
    <property type="evidence" value="ECO:0007669"/>
    <property type="project" value="TreeGrafter"/>
</dbReference>
<dbReference type="GO" id="GO:0005730">
    <property type="term" value="C:nucleolus"/>
    <property type="evidence" value="ECO:0007669"/>
    <property type="project" value="UniProtKB-SubCell"/>
</dbReference>
<dbReference type="GO" id="GO:0000462">
    <property type="term" value="P:maturation of SSU-rRNA from tricistronic rRNA transcript (SSU-rRNA, 5.8S rRNA, LSU-rRNA)"/>
    <property type="evidence" value="ECO:0007669"/>
    <property type="project" value="TreeGrafter"/>
</dbReference>
<dbReference type="InterPro" id="IPR009292">
    <property type="entry name" value="RRP36"/>
</dbReference>
<dbReference type="PANTHER" id="PTHR21738">
    <property type="entry name" value="RIBOSOMAL RNA PROCESSING PROTEIN 36 HOMOLOG"/>
    <property type="match status" value="1"/>
</dbReference>
<dbReference type="PANTHER" id="PTHR21738:SF0">
    <property type="entry name" value="RIBOSOMAL RNA PROCESSING PROTEIN 36 HOMOLOG"/>
    <property type="match status" value="1"/>
</dbReference>
<dbReference type="Pfam" id="PF06102">
    <property type="entry name" value="RRP36"/>
    <property type="match status" value="1"/>
</dbReference>
<gene>
    <name type="primary">RRP36</name>
    <name type="ordered locus">KLLA0C06842g</name>
</gene>
<evidence type="ECO:0000250" key="1"/>
<evidence type="ECO:0000255" key="2"/>
<evidence type="ECO:0000256" key="3">
    <source>
        <dbReference type="SAM" id="MobiDB-lite"/>
    </source>
</evidence>
<evidence type="ECO:0000305" key="4"/>
<feature type="chain" id="PRO_0000397634" description="rRNA biogenesis protein RRP36">
    <location>
        <begin position="1"/>
        <end position="332"/>
    </location>
</feature>
<feature type="region of interest" description="Disordered" evidence="3">
    <location>
        <begin position="1"/>
        <end position="184"/>
    </location>
</feature>
<feature type="region of interest" description="Disordered" evidence="3">
    <location>
        <begin position="305"/>
        <end position="332"/>
    </location>
</feature>
<feature type="coiled-coil region" evidence="2">
    <location>
        <begin position="236"/>
        <end position="283"/>
    </location>
</feature>
<feature type="compositionally biased region" description="Basic and acidic residues" evidence="3">
    <location>
        <begin position="73"/>
        <end position="100"/>
    </location>
</feature>
<feature type="compositionally biased region" description="Acidic residues" evidence="3">
    <location>
        <begin position="124"/>
        <end position="144"/>
    </location>
</feature>
<feature type="compositionally biased region" description="Basic residues" evidence="3">
    <location>
        <begin position="150"/>
        <end position="159"/>
    </location>
</feature>
<feature type="compositionally biased region" description="Basic and acidic residues" evidence="3">
    <location>
        <begin position="321"/>
        <end position="332"/>
    </location>
</feature>
<reference key="1">
    <citation type="journal article" date="2004" name="Nature">
        <title>Genome evolution in yeasts.</title>
        <authorList>
            <person name="Dujon B."/>
            <person name="Sherman D."/>
            <person name="Fischer G."/>
            <person name="Durrens P."/>
            <person name="Casaregola S."/>
            <person name="Lafontaine I."/>
            <person name="de Montigny J."/>
            <person name="Marck C."/>
            <person name="Neuveglise C."/>
            <person name="Talla E."/>
            <person name="Goffard N."/>
            <person name="Frangeul L."/>
            <person name="Aigle M."/>
            <person name="Anthouard V."/>
            <person name="Babour A."/>
            <person name="Barbe V."/>
            <person name="Barnay S."/>
            <person name="Blanchin S."/>
            <person name="Beckerich J.-M."/>
            <person name="Beyne E."/>
            <person name="Bleykasten C."/>
            <person name="Boisrame A."/>
            <person name="Boyer J."/>
            <person name="Cattolico L."/>
            <person name="Confanioleri F."/>
            <person name="de Daruvar A."/>
            <person name="Despons L."/>
            <person name="Fabre E."/>
            <person name="Fairhead C."/>
            <person name="Ferry-Dumazet H."/>
            <person name="Groppi A."/>
            <person name="Hantraye F."/>
            <person name="Hennequin C."/>
            <person name="Jauniaux N."/>
            <person name="Joyet P."/>
            <person name="Kachouri R."/>
            <person name="Kerrest A."/>
            <person name="Koszul R."/>
            <person name="Lemaire M."/>
            <person name="Lesur I."/>
            <person name="Ma L."/>
            <person name="Muller H."/>
            <person name="Nicaud J.-M."/>
            <person name="Nikolski M."/>
            <person name="Oztas S."/>
            <person name="Ozier-Kalogeropoulos O."/>
            <person name="Pellenz S."/>
            <person name="Potier S."/>
            <person name="Richard G.-F."/>
            <person name="Straub M.-L."/>
            <person name="Suleau A."/>
            <person name="Swennen D."/>
            <person name="Tekaia F."/>
            <person name="Wesolowski-Louvel M."/>
            <person name="Westhof E."/>
            <person name="Wirth B."/>
            <person name="Zeniou-Meyer M."/>
            <person name="Zivanovic Y."/>
            <person name="Bolotin-Fukuhara M."/>
            <person name="Thierry A."/>
            <person name="Bouchier C."/>
            <person name="Caudron B."/>
            <person name="Scarpelli C."/>
            <person name="Gaillardin C."/>
            <person name="Weissenbach J."/>
            <person name="Wincker P."/>
            <person name="Souciet J.-L."/>
        </authorList>
    </citation>
    <scope>NUCLEOTIDE SEQUENCE [LARGE SCALE GENOMIC DNA]</scope>
    <source>
        <strain>ATCC 8585 / CBS 2359 / DSM 70799 / NBRC 1267 / NRRL Y-1140 / WM37</strain>
    </source>
</reference>
<accession>Q6CU86</accession>
<proteinExistence type="inferred from homology"/>
<comment type="function">
    <text evidence="1">Component of the 90S pre-ribosome involved in the maturation of rRNAs. Required for early cleavages of the pre-RNAs in the 40S ribosomal subunit maturation pathway (By similarity).</text>
</comment>
<comment type="subunit">
    <text evidence="1">Associates with 90S and pre-40S pre-ribosomal particles.</text>
</comment>
<comment type="subcellular location">
    <subcellularLocation>
        <location evidence="1">Nucleus</location>
        <location evidence="1">Nucleolus</location>
    </subcellularLocation>
</comment>
<comment type="similarity">
    <text evidence="4">Belongs to the RRP36 family.</text>
</comment>
<name>RRP36_KLULA</name>